<name>Y4OQ_SINFN</name>
<keyword id="KW-0997">Cell inner membrane</keyword>
<keyword id="KW-1003">Cell membrane</keyword>
<keyword id="KW-0472">Membrane</keyword>
<keyword id="KW-0614">Plasmid</keyword>
<keyword id="KW-1185">Reference proteome</keyword>
<keyword id="KW-0812">Transmembrane</keyword>
<keyword id="KW-1133">Transmembrane helix</keyword>
<keyword id="KW-0813">Transport</keyword>
<accession>P55602</accession>
<dbReference type="EMBL" id="U00090">
    <property type="protein sequence ID" value="AAB91803.1"/>
    <property type="molecule type" value="Genomic_DNA"/>
</dbReference>
<dbReference type="RefSeq" id="NP_444006.1">
    <property type="nucleotide sequence ID" value="NC_000914.2"/>
</dbReference>
<dbReference type="SMR" id="P55602"/>
<dbReference type="KEGG" id="rhi:NGR_a02190"/>
<dbReference type="PATRIC" id="fig|394.7.peg.230"/>
<dbReference type="eggNOG" id="COG1175">
    <property type="taxonomic scope" value="Bacteria"/>
</dbReference>
<dbReference type="HOGENOM" id="CLU_016047_0_3_5"/>
<dbReference type="OrthoDB" id="9801818at2"/>
<dbReference type="Proteomes" id="UP000001054">
    <property type="component" value="Plasmid pNGR234a"/>
</dbReference>
<dbReference type="GO" id="GO:0005886">
    <property type="term" value="C:plasma membrane"/>
    <property type="evidence" value="ECO:0007669"/>
    <property type="project" value="UniProtKB-SubCell"/>
</dbReference>
<dbReference type="GO" id="GO:0055085">
    <property type="term" value="P:transmembrane transport"/>
    <property type="evidence" value="ECO:0007669"/>
    <property type="project" value="InterPro"/>
</dbReference>
<dbReference type="CDD" id="cd06261">
    <property type="entry name" value="TM_PBP2"/>
    <property type="match status" value="1"/>
</dbReference>
<dbReference type="Gene3D" id="1.10.3720.10">
    <property type="entry name" value="MetI-like"/>
    <property type="match status" value="1"/>
</dbReference>
<dbReference type="InterPro" id="IPR000515">
    <property type="entry name" value="MetI-like"/>
</dbReference>
<dbReference type="InterPro" id="IPR035906">
    <property type="entry name" value="MetI-like_sf"/>
</dbReference>
<dbReference type="PANTHER" id="PTHR43005">
    <property type="entry name" value="BLR7065 PROTEIN"/>
    <property type="match status" value="1"/>
</dbReference>
<dbReference type="PANTHER" id="PTHR43005:SF1">
    <property type="entry name" value="SPERMIDINE_PUTRESCINE TRANSPORT SYSTEM PERMEASE PROTEIN"/>
    <property type="match status" value="1"/>
</dbReference>
<dbReference type="Pfam" id="PF00528">
    <property type="entry name" value="BPD_transp_1"/>
    <property type="match status" value="1"/>
</dbReference>
<dbReference type="SUPFAM" id="SSF161098">
    <property type="entry name" value="MetI-like"/>
    <property type="match status" value="1"/>
</dbReference>
<dbReference type="PROSITE" id="PS50928">
    <property type="entry name" value="ABC_TM1"/>
    <property type="match status" value="1"/>
</dbReference>
<sequence length="309" mass="34193">MTISQTVPRGAVAVRRRRRIRISTVVWFTMPAAAIMLLVLGVPLVYSFYYSLTGWSLVVPGSDQDFIGLLNYTDVLRSSEFWAAIRVTLIYAVVAVSLECALGILFAVLLNLEFFGRGLFRSLMLIPMVITPAVVGIFWKLLYEQDSGVFNYLLGTLGFEPVPWLSLTVALASVIIVDVWQSTPFFTLIILAGLQSLDRDTVSAAQADGANALQVFRYLTLPHLVPYIMIAAAFRIIGVMADFDKIFLLTLGGPGNVTTTLSVYAYNTGFKVFDIGRTTAISWIYVVFVLAISAPLIWRLFRGASVNRH</sequence>
<gene>
    <name type="ordered locus">NGR_a02190</name>
    <name type="ORF">y4oQ</name>
</gene>
<geneLocation type="plasmid">
    <name>sym pNGR234a</name>
</geneLocation>
<feature type="chain" id="PRO_0000060295" description="Probable ABC transporter permease protein y4oQ">
    <location>
        <begin position="1"/>
        <end position="309"/>
    </location>
</feature>
<feature type="transmembrane region" description="Helical" evidence="1">
    <location>
        <begin position="25"/>
        <end position="45"/>
    </location>
</feature>
<feature type="transmembrane region" description="Helical" evidence="1">
    <location>
        <begin position="89"/>
        <end position="109"/>
    </location>
</feature>
<feature type="transmembrane region" description="Helical" evidence="1">
    <location>
        <begin position="123"/>
        <end position="143"/>
    </location>
</feature>
<feature type="transmembrane region" description="Helical" evidence="1">
    <location>
        <begin position="174"/>
        <end position="194"/>
    </location>
</feature>
<feature type="transmembrane region" description="Helical" evidence="1">
    <location>
        <begin position="221"/>
        <end position="241"/>
    </location>
</feature>
<feature type="transmembrane region" description="Helical" evidence="1">
    <location>
        <begin position="246"/>
        <end position="266"/>
    </location>
</feature>
<feature type="transmembrane region" description="Helical" evidence="1">
    <location>
        <begin position="278"/>
        <end position="298"/>
    </location>
</feature>
<feature type="domain" description="ABC transmembrane type-1" evidence="1">
    <location>
        <begin position="85"/>
        <end position="296"/>
    </location>
</feature>
<evidence type="ECO:0000255" key="1">
    <source>
        <dbReference type="PROSITE-ProRule" id="PRU00441"/>
    </source>
</evidence>
<evidence type="ECO:0000305" key="2"/>
<reference key="1">
    <citation type="journal article" date="1997" name="Nature">
        <title>Molecular basis of symbiosis between Rhizobium and legumes.</title>
        <authorList>
            <person name="Freiberg C.A."/>
            <person name="Fellay R."/>
            <person name="Bairoch A."/>
            <person name="Broughton W.J."/>
            <person name="Rosenthal A."/>
            <person name="Perret X."/>
        </authorList>
    </citation>
    <scope>NUCLEOTIDE SEQUENCE [LARGE SCALE GENOMIC DNA]</scope>
    <source>
        <strain>NBRC 101917 / NGR234</strain>
    </source>
</reference>
<reference key="2">
    <citation type="journal article" date="2009" name="Appl. Environ. Microbiol.">
        <title>Rhizobium sp. strain NGR234 possesses a remarkable number of secretion systems.</title>
        <authorList>
            <person name="Schmeisser C."/>
            <person name="Liesegang H."/>
            <person name="Krysciak D."/>
            <person name="Bakkou N."/>
            <person name="Le Quere A."/>
            <person name="Wollherr A."/>
            <person name="Heinemeyer I."/>
            <person name="Morgenstern B."/>
            <person name="Pommerening-Roeser A."/>
            <person name="Flores M."/>
            <person name="Palacios R."/>
            <person name="Brenner S."/>
            <person name="Gottschalk G."/>
            <person name="Schmitz R.A."/>
            <person name="Broughton W.J."/>
            <person name="Perret X."/>
            <person name="Strittmatter A.W."/>
            <person name="Streit W.R."/>
        </authorList>
    </citation>
    <scope>NUCLEOTIDE SEQUENCE [LARGE SCALE GENOMIC DNA]</scope>
    <source>
        <strain>NBRC 101917 / NGR234</strain>
    </source>
</reference>
<protein>
    <recommendedName>
        <fullName>Probable ABC transporter permease protein y4oQ</fullName>
    </recommendedName>
</protein>
<proteinExistence type="inferred from homology"/>
<comment type="function">
    <text>Probably part of the binding-protein-dependent transport system y4oPQRS. This system probably transports a sugar-like molecule. Probably responsible for the translocation of the substrate across the membrane.</text>
</comment>
<comment type="subcellular location">
    <subcellularLocation>
        <location evidence="2">Cell inner membrane</location>
        <topology evidence="1">Multi-pass membrane protein</topology>
    </subcellularLocation>
</comment>
<comment type="similarity">
    <text evidence="2">Belongs to the binding-protein-dependent transport system permease family. MalFG subfamily.</text>
</comment>
<organism>
    <name type="scientific">Sinorhizobium fredii (strain NBRC 101917 / NGR234)</name>
    <dbReference type="NCBI Taxonomy" id="394"/>
    <lineage>
        <taxon>Bacteria</taxon>
        <taxon>Pseudomonadati</taxon>
        <taxon>Pseudomonadota</taxon>
        <taxon>Alphaproteobacteria</taxon>
        <taxon>Hyphomicrobiales</taxon>
        <taxon>Rhizobiaceae</taxon>
        <taxon>Sinorhizobium/Ensifer group</taxon>
        <taxon>Sinorhizobium</taxon>
    </lineage>
</organism>